<gene>
    <name evidence="1" type="primary">ispF</name>
    <name type="synonym">mecS</name>
    <name type="ordered locus">BAV1059</name>
</gene>
<accession>Q2KUX6</accession>
<organism>
    <name type="scientific">Bordetella avium (strain 197N)</name>
    <dbReference type="NCBI Taxonomy" id="360910"/>
    <lineage>
        <taxon>Bacteria</taxon>
        <taxon>Pseudomonadati</taxon>
        <taxon>Pseudomonadota</taxon>
        <taxon>Betaproteobacteria</taxon>
        <taxon>Burkholderiales</taxon>
        <taxon>Alcaligenaceae</taxon>
        <taxon>Bordetella</taxon>
    </lineage>
</organism>
<comment type="function">
    <text evidence="1">Involved in the biosynthesis of isopentenyl diphosphate (IPP) and dimethylallyl diphosphate (DMAPP), two major building blocks of isoprenoid compounds. Catalyzes the conversion of 4-diphosphocytidyl-2-C-methyl-D-erythritol 2-phosphate (CDP-ME2P) to 2-C-methyl-D-erythritol 2,4-cyclodiphosphate (ME-CPP) with a corresponding release of cytidine 5-monophosphate (CMP).</text>
</comment>
<comment type="catalytic activity">
    <reaction evidence="1">
        <text>4-CDP-2-C-methyl-D-erythritol 2-phosphate = 2-C-methyl-D-erythritol 2,4-cyclic diphosphate + CMP</text>
        <dbReference type="Rhea" id="RHEA:23864"/>
        <dbReference type="ChEBI" id="CHEBI:57919"/>
        <dbReference type="ChEBI" id="CHEBI:58483"/>
        <dbReference type="ChEBI" id="CHEBI:60377"/>
        <dbReference type="EC" id="4.6.1.12"/>
    </reaction>
</comment>
<comment type="cofactor">
    <cofactor evidence="1">
        <name>a divalent metal cation</name>
        <dbReference type="ChEBI" id="CHEBI:60240"/>
    </cofactor>
    <text evidence="1">Binds 1 divalent metal cation per subunit.</text>
</comment>
<comment type="pathway">
    <text evidence="1">Isoprenoid biosynthesis; isopentenyl diphosphate biosynthesis via DXP pathway; isopentenyl diphosphate from 1-deoxy-D-xylulose 5-phosphate: step 4/6.</text>
</comment>
<comment type="subunit">
    <text evidence="1">Homotrimer.</text>
</comment>
<comment type="similarity">
    <text evidence="1">Belongs to the IspF family.</text>
</comment>
<name>ISPF_BORA1</name>
<protein>
    <recommendedName>
        <fullName evidence="1">2-C-methyl-D-erythritol 2,4-cyclodiphosphate synthase</fullName>
        <shortName evidence="1">MECDP-synthase</shortName>
        <shortName evidence="1">MECPP-synthase</shortName>
        <shortName evidence="1">MECPS</shortName>
        <ecNumber evidence="1">4.6.1.12</ecNumber>
    </recommendedName>
</protein>
<evidence type="ECO:0000255" key="1">
    <source>
        <dbReference type="HAMAP-Rule" id="MF_00107"/>
    </source>
</evidence>
<dbReference type="EC" id="4.6.1.12" evidence="1"/>
<dbReference type="EMBL" id="AM167904">
    <property type="protein sequence ID" value="CAJ48668.1"/>
    <property type="molecule type" value="Genomic_DNA"/>
</dbReference>
<dbReference type="RefSeq" id="WP_012416743.1">
    <property type="nucleotide sequence ID" value="NC_010645.1"/>
</dbReference>
<dbReference type="SMR" id="Q2KUX6"/>
<dbReference type="STRING" id="360910.BAV1059"/>
<dbReference type="GeneID" id="92935747"/>
<dbReference type="KEGG" id="bav:BAV1059"/>
<dbReference type="eggNOG" id="COG0245">
    <property type="taxonomic scope" value="Bacteria"/>
</dbReference>
<dbReference type="HOGENOM" id="CLU_084630_2_0_4"/>
<dbReference type="OrthoDB" id="9804336at2"/>
<dbReference type="UniPathway" id="UPA00056">
    <property type="reaction ID" value="UER00095"/>
</dbReference>
<dbReference type="Proteomes" id="UP000001977">
    <property type="component" value="Chromosome"/>
</dbReference>
<dbReference type="GO" id="GO:0008685">
    <property type="term" value="F:2-C-methyl-D-erythritol 2,4-cyclodiphosphate synthase activity"/>
    <property type="evidence" value="ECO:0007669"/>
    <property type="project" value="UniProtKB-UniRule"/>
</dbReference>
<dbReference type="GO" id="GO:0046872">
    <property type="term" value="F:metal ion binding"/>
    <property type="evidence" value="ECO:0007669"/>
    <property type="project" value="UniProtKB-KW"/>
</dbReference>
<dbReference type="GO" id="GO:0019288">
    <property type="term" value="P:isopentenyl diphosphate biosynthetic process, methylerythritol 4-phosphate pathway"/>
    <property type="evidence" value="ECO:0007669"/>
    <property type="project" value="UniProtKB-UniRule"/>
</dbReference>
<dbReference type="GO" id="GO:0016114">
    <property type="term" value="P:terpenoid biosynthetic process"/>
    <property type="evidence" value="ECO:0007669"/>
    <property type="project" value="InterPro"/>
</dbReference>
<dbReference type="CDD" id="cd00554">
    <property type="entry name" value="MECDP_synthase"/>
    <property type="match status" value="1"/>
</dbReference>
<dbReference type="FunFam" id="3.30.1330.50:FF:000001">
    <property type="entry name" value="2-C-methyl-D-erythritol 2,4-cyclodiphosphate synthase"/>
    <property type="match status" value="1"/>
</dbReference>
<dbReference type="Gene3D" id="3.30.1330.50">
    <property type="entry name" value="2-C-methyl-D-erythritol 2,4-cyclodiphosphate synthase"/>
    <property type="match status" value="1"/>
</dbReference>
<dbReference type="HAMAP" id="MF_00107">
    <property type="entry name" value="IspF"/>
    <property type="match status" value="1"/>
</dbReference>
<dbReference type="InterPro" id="IPR003526">
    <property type="entry name" value="MECDP_synthase"/>
</dbReference>
<dbReference type="InterPro" id="IPR020555">
    <property type="entry name" value="MECDP_synthase_CS"/>
</dbReference>
<dbReference type="InterPro" id="IPR036571">
    <property type="entry name" value="MECDP_synthase_sf"/>
</dbReference>
<dbReference type="NCBIfam" id="TIGR00151">
    <property type="entry name" value="ispF"/>
    <property type="match status" value="1"/>
</dbReference>
<dbReference type="PANTHER" id="PTHR43181">
    <property type="entry name" value="2-C-METHYL-D-ERYTHRITOL 2,4-CYCLODIPHOSPHATE SYNTHASE, CHLOROPLASTIC"/>
    <property type="match status" value="1"/>
</dbReference>
<dbReference type="PANTHER" id="PTHR43181:SF1">
    <property type="entry name" value="2-C-METHYL-D-ERYTHRITOL 2,4-CYCLODIPHOSPHATE SYNTHASE, CHLOROPLASTIC"/>
    <property type="match status" value="1"/>
</dbReference>
<dbReference type="Pfam" id="PF02542">
    <property type="entry name" value="YgbB"/>
    <property type="match status" value="1"/>
</dbReference>
<dbReference type="SUPFAM" id="SSF69765">
    <property type="entry name" value="IpsF-like"/>
    <property type="match status" value="1"/>
</dbReference>
<dbReference type="PROSITE" id="PS01350">
    <property type="entry name" value="ISPF"/>
    <property type="match status" value="1"/>
</dbReference>
<feature type="chain" id="PRO_0000237709" description="2-C-methyl-D-erythritol 2,4-cyclodiphosphate synthase">
    <location>
        <begin position="1"/>
        <end position="162"/>
    </location>
</feature>
<feature type="binding site" evidence="1">
    <location>
        <begin position="12"/>
        <end position="14"/>
    </location>
    <ligand>
        <name>4-CDP-2-C-methyl-D-erythritol 2-phosphate</name>
        <dbReference type="ChEBI" id="CHEBI:57919"/>
    </ligand>
</feature>
<feature type="binding site" evidence="1">
    <location>
        <position position="12"/>
    </location>
    <ligand>
        <name>a divalent metal cation</name>
        <dbReference type="ChEBI" id="CHEBI:60240"/>
    </ligand>
</feature>
<feature type="binding site" evidence="1">
    <location>
        <position position="14"/>
    </location>
    <ligand>
        <name>a divalent metal cation</name>
        <dbReference type="ChEBI" id="CHEBI:60240"/>
    </ligand>
</feature>
<feature type="binding site" evidence="1">
    <location>
        <begin position="38"/>
        <end position="39"/>
    </location>
    <ligand>
        <name>4-CDP-2-C-methyl-D-erythritol 2-phosphate</name>
        <dbReference type="ChEBI" id="CHEBI:57919"/>
    </ligand>
</feature>
<feature type="binding site" evidence="1">
    <location>
        <position position="46"/>
    </location>
    <ligand>
        <name>a divalent metal cation</name>
        <dbReference type="ChEBI" id="CHEBI:60240"/>
    </ligand>
</feature>
<feature type="binding site" evidence="1">
    <location>
        <begin position="60"/>
        <end position="62"/>
    </location>
    <ligand>
        <name>4-CDP-2-C-methyl-D-erythritol 2-phosphate</name>
        <dbReference type="ChEBI" id="CHEBI:57919"/>
    </ligand>
</feature>
<feature type="binding site" evidence="1">
    <location>
        <begin position="65"/>
        <end position="69"/>
    </location>
    <ligand>
        <name>4-CDP-2-C-methyl-D-erythritol 2-phosphate</name>
        <dbReference type="ChEBI" id="CHEBI:57919"/>
    </ligand>
</feature>
<feature type="binding site" evidence="1">
    <location>
        <position position="146"/>
    </location>
    <ligand>
        <name>4-CDP-2-C-methyl-D-erythritol 2-phosphate</name>
        <dbReference type="ChEBI" id="CHEBI:57919"/>
    </ligand>
</feature>
<feature type="site" description="Transition state stabilizer" evidence="1">
    <location>
        <position position="38"/>
    </location>
</feature>
<feature type="site" description="Transition state stabilizer" evidence="1">
    <location>
        <position position="137"/>
    </location>
</feature>
<reference key="1">
    <citation type="journal article" date="2006" name="J. Bacteriol.">
        <title>Comparison of the genome sequence of the poultry pathogen Bordetella avium with those of B. bronchiseptica, B. pertussis, and B. parapertussis reveals extensive diversity in surface structures associated with host interaction.</title>
        <authorList>
            <person name="Sebaihia M."/>
            <person name="Preston A."/>
            <person name="Maskell D.J."/>
            <person name="Kuzmiak H."/>
            <person name="Connell T.D."/>
            <person name="King N.D."/>
            <person name="Orndorff P.E."/>
            <person name="Miyamoto D.M."/>
            <person name="Thomson N.R."/>
            <person name="Harris D."/>
            <person name="Goble A."/>
            <person name="Lord A."/>
            <person name="Murphy L."/>
            <person name="Quail M.A."/>
            <person name="Rutter S."/>
            <person name="Squares R."/>
            <person name="Squares S."/>
            <person name="Woodward J."/>
            <person name="Parkhill J."/>
            <person name="Temple L.M."/>
        </authorList>
    </citation>
    <scope>NUCLEOTIDE SEQUENCE [LARGE SCALE GENOMIC DNA]</scope>
    <source>
        <strain>197N</strain>
    </source>
</reference>
<keyword id="KW-0414">Isoprene biosynthesis</keyword>
<keyword id="KW-0456">Lyase</keyword>
<keyword id="KW-0479">Metal-binding</keyword>
<keyword id="KW-1185">Reference proteome</keyword>
<proteinExistence type="inferred from homology"/>
<sequence>MTIPFRVGQGFDVHALVTGRPLIIGGVRIEHSHGLLGHSDADVLLHAVTDAILGAAGLGDIGRHFPDTDPRFKGADSRVLLREAMARVDAAGWQVVNVDATVHAQAPKIGPHAPAMVANIAADLGIAHDLVNIKAKTNEGLGYLGRKEGIAATVVTLLARQA</sequence>